<accession>P0C670</accession>
<accession>B4XT48</accession>
<comment type="subcellular location">
    <subcellularLocation>
        <location evidence="1">Secreted</location>
    </subcellularLocation>
</comment>
<comment type="tissue specificity">
    <text>Expressed by the venom duct.</text>
</comment>
<comment type="domain">
    <text>The cysteine framework is V (CC-CC).</text>
</comment>
<comment type="PTM">
    <text evidence="4">Contains 2 disulfide bonds that can be either 'C1-C3, C2-C4' or 'C1-C4, C2-C3', since these disulfide connectivities have been observed for conotoxins with cysteine framework V (for examples, see AC P0DQQ7 and AC P81755).</text>
</comment>
<comment type="similarity">
    <text evidence="4">Belongs to the conotoxin T superfamily.</text>
</comment>
<evidence type="ECO:0000250" key="1"/>
<evidence type="ECO:0000255" key="2"/>
<evidence type="ECO:0000303" key="3">
    <source>
    </source>
</evidence>
<evidence type="ECO:0000305" key="4"/>
<protein>
    <recommendedName>
        <fullName evidence="3">Conotoxin Vi5.1b</fullName>
    </recommendedName>
</protein>
<proteinExistence type="evidence at transcript level"/>
<keyword id="KW-0027">Amidation</keyword>
<keyword id="KW-1015">Disulfide bond</keyword>
<keyword id="KW-0964">Secreted</keyword>
<keyword id="KW-0732">Signal</keyword>
<keyword id="KW-0800">Toxin</keyword>
<organism>
    <name type="scientific">Conus virgo</name>
    <name type="common">Virgin cone</name>
    <dbReference type="NCBI Taxonomy" id="89427"/>
    <lineage>
        <taxon>Eukaryota</taxon>
        <taxon>Metazoa</taxon>
        <taxon>Spiralia</taxon>
        <taxon>Lophotrochozoa</taxon>
        <taxon>Mollusca</taxon>
        <taxon>Gastropoda</taxon>
        <taxon>Caenogastropoda</taxon>
        <taxon>Neogastropoda</taxon>
        <taxon>Conoidea</taxon>
        <taxon>Conidae</taxon>
        <taxon>Conus</taxon>
        <taxon>Virgiconus</taxon>
    </lineage>
</organism>
<reference key="1">
    <citation type="journal article" date="2007" name="Peptides">
        <title>Identification of six novel T-1 conotoxins from Conus pulicarius by molecular cloning.</title>
        <authorList>
            <person name="Peng C."/>
            <person name="Wu X."/>
            <person name="Han Y."/>
            <person name="Yuan D."/>
            <person name="Chi C."/>
            <person name="Wang C."/>
        </authorList>
    </citation>
    <scope>NUCLEOTIDE SEQUENCE [MRNA]</scope>
    <source>
        <tissue>Venom duct</tissue>
    </source>
</reference>
<name>CT51B_CONVR</name>
<sequence>MLCVPVFIILFIIIPFAPTSESQPKTKEEVAKASVHDNAERTLQRLWNQSHCCPIDLQCCPPG</sequence>
<feature type="signal peptide" evidence="2">
    <location>
        <begin position="1"/>
        <end position="22"/>
    </location>
</feature>
<feature type="propeptide" id="PRO_0000316915" evidence="1">
    <location>
        <begin position="23"/>
        <end position="50"/>
    </location>
</feature>
<feature type="peptide" id="PRO_0000316916" description="Conotoxin Vi5.1b">
    <location>
        <begin position="51"/>
        <end position="62"/>
    </location>
</feature>
<feature type="modified residue" description="Proline amide" evidence="1">
    <location>
        <position position="62"/>
    </location>
</feature>
<dbReference type="EMBL" id="EU090176">
    <property type="protein sequence ID" value="ABW77584.1"/>
    <property type="molecule type" value="mRNA"/>
</dbReference>
<dbReference type="ConoServer" id="2813">
    <property type="toxin name" value="Vi5.1b precursor"/>
</dbReference>
<dbReference type="GO" id="GO:0005576">
    <property type="term" value="C:extracellular region"/>
    <property type="evidence" value="ECO:0007669"/>
    <property type="project" value="UniProtKB-SubCell"/>
</dbReference>
<dbReference type="GO" id="GO:0090729">
    <property type="term" value="F:toxin activity"/>
    <property type="evidence" value="ECO:0007669"/>
    <property type="project" value="UniProtKB-KW"/>
</dbReference>
<dbReference type="InterPro" id="IPR031565">
    <property type="entry name" value="T-conotoxin"/>
</dbReference>
<dbReference type="Pfam" id="PF16981">
    <property type="entry name" value="Chi-conotoxin"/>
    <property type="match status" value="1"/>
</dbReference>